<reference key="1">
    <citation type="journal article" date="1999" name="Science">
        <title>Genome sequence of the radioresistant bacterium Deinococcus radiodurans R1.</title>
        <authorList>
            <person name="White O."/>
            <person name="Eisen J.A."/>
            <person name="Heidelberg J.F."/>
            <person name="Hickey E.K."/>
            <person name="Peterson J.D."/>
            <person name="Dodson R.J."/>
            <person name="Haft D.H."/>
            <person name="Gwinn M.L."/>
            <person name="Nelson W.C."/>
            <person name="Richardson D.L."/>
            <person name="Moffat K.S."/>
            <person name="Qin H."/>
            <person name="Jiang L."/>
            <person name="Pamphile W."/>
            <person name="Crosby M."/>
            <person name="Shen M."/>
            <person name="Vamathevan J.J."/>
            <person name="Lam P."/>
            <person name="McDonald L.A."/>
            <person name="Utterback T.R."/>
            <person name="Zalewski C."/>
            <person name="Makarova K.S."/>
            <person name="Aravind L."/>
            <person name="Daly M.J."/>
            <person name="Minton K.W."/>
            <person name="Fleischmann R.D."/>
            <person name="Ketchum K.A."/>
            <person name="Nelson K.E."/>
            <person name="Salzberg S.L."/>
            <person name="Smith H.O."/>
            <person name="Venter J.C."/>
            <person name="Fraser C.M."/>
        </authorList>
    </citation>
    <scope>NUCLEOTIDE SEQUENCE [LARGE SCALE GENOMIC DNA]</scope>
    <source>
        <strain>ATCC 13939 / DSM 20539 / JCM 16871 / CCUG 27074 / LMG 4051 / NBRC 15346 / NCIMB 9279 / VKM B-1422 / R1</strain>
    </source>
</reference>
<name>DNAG_DEIRA</name>
<gene>
    <name evidence="1" type="primary">dnaG</name>
    <name type="ordered locus">DR_0601</name>
</gene>
<accession>Q9RWR5</accession>
<protein>
    <recommendedName>
        <fullName evidence="1">DNA primase</fullName>
        <ecNumber evidence="1">2.7.7.101</ecNumber>
    </recommendedName>
</protein>
<proteinExistence type="inferred from homology"/>
<feature type="chain" id="PRO_0000180489" description="DNA primase">
    <location>
        <begin position="1"/>
        <end position="571"/>
    </location>
</feature>
<feature type="domain" description="Toprim" evidence="1">
    <location>
        <begin position="229"/>
        <end position="309"/>
    </location>
</feature>
<feature type="zinc finger region" description="CHC2-type" evidence="1">
    <location>
        <begin position="20"/>
        <end position="44"/>
    </location>
</feature>
<feature type="binding site" evidence="1">
    <location>
        <position position="235"/>
    </location>
    <ligand>
        <name>Mg(2+)</name>
        <dbReference type="ChEBI" id="CHEBI:18420"/>
        <label>1</label>
        <note>catalytic</note>
    </ligand>
</feature>
<feature type="binding site" evidence="1">
    <location>
        <position position="280"/>
    </location>
    <ligand>
        <name>Mg(2+)</name>
        <dbReference type="ChEBI" id="CHEBI:18420"/>
        <label>1</label>
        <note>catalytic</note>
    </ligand>
</feature>
<feature type="binding site" evidence="1">
    <location>
        <position position="280"/>
    </location>
    <ligand>
        <name>Mg(2+)</name>
        <dbReference type="ChEBI" id="CHEBI:18420"/>
        <label>2</label>
    </ligand>
</feature>
<feature type="binding site" evidence="1">
    <location>
        <position position="282"/>
    </location>
    <ligand>
        <name>Mg(2+)</name>
        <dbReference type="ChEBI" id="CHEBI:18420"/>
        <label>2</label>
    </ligand>
</feature>
<sequence length="571" mass="62508">MVGEYVRLTPAGKGRLKGLCPFHKEKTPSFQVDTEKGYYHCFGCKASGDVFGFVQQMEHLSFGDALRKLADRAGIQIDAKYGEKVSRDLYEVNAFALDYFRSHLPGPALDYLRGRGLSDETIAAFELGYAPDGWDGLLKLARTKGVSEKQLLEAGLLTENPENGRVYDRFRGRVMFPIRDHLGRLVGFGGRVLDDSKPKYLNTPETAAFKKGELLYGLDKARSGLGGGAELVVVEGYMDVISMHQHGFTGAVASLGTALTAEHAQLLERLGAQSIVLMFDQDGAGLKATLAGLDQVIGAKFRVRATSVPSGKDPADALLAGDDAGIREALAGGLDEVKYRVQAATEKYGVDTNEGKRRVLMELLPRMQNLDPLDAIAQDMRGAACELLGIRPEALLDWITSKAKRRTLTDTHLAGMSQSSGEEEHELALLRQLLVDPSLLAKLDGSLPWRNEAVRKVMLAAQGARSPDDILDIFRGQPEEQLLIRLMFEGRDSGSLSRASSQEYEQKVTTYAAHAVDDIQVTLNIDALKTEVDLLKKQLLSTPPAEQLALLSQIQELQRAIEAEKRARRGS</sequence>
<organism>
    <name type="scientific">Deinococcus radiodurans (strain ATCC 13939 / DSM 20539 / JCM 16871 / CCUG 27074 / LMG 4051 / NBRC 15346 / NCIMB 9279 / VKM B-1422 / R1)</name>
    <dbReference type="NCBI Taxonomy" id="243230"/>
    <lineage>
        <taxon>Bacteria</taxon>
        <taxon>Thermotogati</taxon>
        <taxon>Deinococcota</taxon>
        <taxon>Deinococci</taxon>
        <taxon>Deinococcales</taxon>
        <taxon>Deinococcaceae</taxon>
        <taxon>Deinococcus</taxon>
    </lineage>
</organism>
<comment type="function">
    <text evidence="1">RNA polymerase that catalyzes the synthesis of short RNA molecules used as primers for DNA polymerase during DNA replication.</text>
</comment>
<comment type="catalytic activity">
    <reaction evidence="1">
        <text>ssDNA + n NTP = ssDNA/pppN(pN)n-1 hybrid + (n-1) diphosphate.</text>
        <dbReference type="EC" id="2.7.7.101"/>
    </reaction>
</comment>
<comment type="cofactor">
    <cofactor evidence="1">
        <name>Zn(2+)</name>
        <dbReference type="ChEBI" id="CHEBI:29105"/>
    </cofactor>
    <text evidence="1">Binds 1 zinc ion per monomer.</text>
</comment>
<comment type="cofactor">
    <cofactor evidence="1">
        <name>Mg(2+)</name>
        <dbReference type="ChEBI" id="CHEBI:18420"/>
    </cofactor>
    <text evidence="1">Binds two Mg(2+) per subunit.</text>
</comment>
<comment type="subunit">
    <text evidence="1">Monomer. Interacts with DnaB.</text>
</comment>
<comment type="domain">
    <text evidence="1">Contains an N-terminal zinc-binding domain, a central core domain that contains the primase activity, and a C-terminal DnaB-binding domain.</text>
</comment>
<comment type="similarity">
    <text evidence="1">Belongs to the DnaG primase family.</text>
</comment>
<evidence type="ECO:0000255" key="1">
    <source>
        <dbReference type="HAMAP-Rule" id="MF_00974"/>
    </source>
</evidence>
<dbReference type="EC" id="2.7.7.101" evidence="1"/>
<dbReference type="EMBL" id="AE000513">
    <property type="protein sequence ID" value="AAF10180.1"/>
    <property type="molecule type" value="Genomic_DNA"/>
</dbReference>
<dbReference type="PIR" id="A75499">
    <property type="entry name" value="A75499"/>
</dbReference>
<dbReference type="RefSeq" id="NP_294324.1">
    <property type="nucleotide sequence ID" value="NC_001263.1"/>
</dbReference>
<dbReference type="RefSeq" id="WP_010887246.1">
    <property type="nucleotide sequence ID" value="NZ_CP015081.1"/>
</dbReference>
<dbReference type="SMR" id="Q9RWR5"/>
<dbReference type="FunCoup" id="Q9RWR5">
    <property type="interactions" value="300"/>
</dbReference>
<dbReference type="STRING" id="243230.DR_0601"/>
<dbReference type="PaxDb" id="243230-DR_0601"/>
<dbReference type="EnsemblBacteria" id="AAF10180">
    <property type="protein sequence ID" value="AAF10180"/>
    <property type="gene ID" value="DR_0601"/>
</dbReference>
<dbReference type="KEGG" id="dra:DR_0601"/>
<dbReference type="PATRIC" id="fig|243230.17.peg.779"/>
<dbReference type="eggNOG" id="COG0358">
    <property type="taxonomic scope" value="Bacteria"/>
</dbReference>
<dbReference type="HOGENOM" id="CLU_013501_3_1_0"/>
<dbReference type="InParanoid" id="Q9RWR5"/>
<dbReference type="OrthoDB" id="9803773at2"/>
<dbReference type="Proteomes" id="UP000002524">
    <property type="component" value="Chromosome 1"/>
</dbReference>
<dbReference type="GO" id="GO:0005737">
    <property type="term" value="C:cytoplasm"/>
    <property type="evidence" value="ECO:0000318"/>
    <property type="project" value="GO_Central"/>
</dbReference>
<dbReference type="GO" id="GO:0000428">
    <property type="term" value="C:DNA-directed RNA polymerase complex"/>
    <property type="evidence" value="ECO:0007669"/>
    <property type="project" value="UniProtKB-KW"/>
</dbReference>
<dbReference type="GO" id="GO:1990077">
    <property type="term" value="C:primosome complex"/>
    <property type="evidence" value="ECO:0007669"/>
    <property type="project" value="UniProtKB-KW"/>
</dbReference>
<dbReference type="GO" id="GO:0003677">
    <property type="term" value="F:DNA binding"/>
    <property type="evidence" value="ECO:0007669"/>
    <property type="project" value="UniProtKB-KW"/>
</dbReference>
<dbReference type="GO" id="GO:0003899">
    <property type="term" value="F:DNA-directed RNA polymerase activity"/>
    <property type="evidence" value="ECO:0007669"/>
    <property type="project" value="InterPro"/>
</dbReference>
<dbReference type="GO" id="GO:0008270">
    <property type="term" value="F:zinc ion binding"/>
    <property type="evidence" value="ECO:0007669"/>
    <property type="project" value="UniProtKB-UniRule"/>
</dbReference>
<dbReference type="GO" id="GO:0006269">
    <property type="term" value="P:DNA replication, synthesis of primer"/>
    <property type="evidence" value="ECO:0000318"/>
    <property type="project" value="GO_Central"/>
</dbReference>
<dbReference type="CDD" id="cd03364">
    <property type="entry name" value="TOPRIM_DnaG_primases"/>
    <property type="match status" value="1"/>
</dbReference>
<dbReference type="FunFam" id="3.90.980.10:FF:000001">
    <property type="entry name" value="DNA primase"/>
    <property type="match status" value="1"/>
</dbReference>
<dbReference type="Gene3D" id="3.40.1360.10">
    <property type="match status" value="1"/>
</dbReference>
<dbReference type="Gene3D" id="3.90.980.10">
    <property type="entry name" value="DNA primase, catalytic core, N-terminal domain"/>
    <property type="match status" value="1"/>
</dbReference>
<dbReference type="Gene3D" id="3.90.580.10">
    <property type="entry name" value="Zinc finger, CHC2-type domain"/>
    <property type="match status" value="1"/>
</dbReference>
<dbReference type="HAMAP" id="MF_00974">
    <property type="entry name" value="DNA_primase_DnaG"/>
    <property type="match status" value="1"/>
</dbReference>
<dbReference type="InterPro" id="IPR037068">
    <property type="entry name" value="DNA_primase_core_N_sf"/>
</dbReference>
<dbReference type="InterPro" id="IPR006295">
    <property type="entry name" value="DNA_primase_DnaG"/>
</dbReference>
<dbReference type="InterPro" id="IPR036977">
    <property type="entry name" value="DNA_primase_Znf_CHC2"/>
</dbReference>
<dbReference type="InterPro" id="IPR030846">
    <property type="entry name" value="DnaG_bac"/>
</dbReference>
<dbReference type="InterPro" id="IPR013264">
    <property type="entry name" value="DNAG_N"/>
</dbReference>
<dbReference type="InterPro" id="IPR050219">
    <property type="entry name" value="DnaG_primase"/>
</dbReference>
<dbReference type="InterPro" id="IPR034151">
    <property type="entry name" value="TOPRIM_DnaG_bac"/>
</dbReference>
<dbReference type="InterPro" id="IPR006171">
    <property type="entry name" value="TOPRIM_dom"/>
</dbReference>
<dbReference type="InterPro" id="IPR002694">
    <property type="entry name" value="Znf_CHC2"/>
</dbReference>
<dbReference type="NCBIfam" id="TIGR01391">
    <property type="entry name" value="dnaG"/>
    <property type="match status" value="1"/>
</dbReference>
<dbReference type="PANTHER" id="PTHR30313">
    <property type="entry name" value="DNA PRIMASE"/>
    <property type="match status" value="1"/>
</dbReference>
<dbReference type="PANTHER" id="PTHR30313:SF2">
    <property type="entry name" value="DNA PRIMASE"/>
    <property type="match status" value="1"/>
</dbReference>
<dbReference type="Pfam" id="PF08275">
    <property type="entry name" value="DNAG_N"/>
    <property type="match status" value="1"/>
</dbReference>
<dbReference type="Pfam" id="PF13155">
    <property type="entry name" value="Toprim_2"/>
    <property type="match status" value="1"/>
</dbReference>
<dbReference type="Pfam" id="PF01807">
    <property type="entry name" value="Zn_ribbon_DnaG"/>
    <property type="match status" value="1"/>
</dbReference>
<dbReference type="PIRSF" id="PIRSF002811">
    <property type="entry name" value="DnaG"/>
    <property type="match status" value="1"/>
</dbReference>
<dbReference type="SMART" id="SM00493">
    <property type="entry name" value="TOPRIM"/>
    <property type="match status" value="1"/>
</dbReference>
<dbReference type="SMART" id="SM00400">
    <property type="entry name" value="ZnF_CHCC"/>
    <property type="match status" value="1"/>
</dbReference>
<dbReference type="SUPFAM" id="SSF56731">
    <property type="entry name" value="DNA primase core"/>
    <property type="match status" value="1"/>
</dbReference>
<dbReference type="SUPFAM" id="SSF57783">
    <property type="entry name" value="Zinc beta-ribbon"/>
    <property type="match status" value="1"/>
</dbReference>
<dbReference type="PROSITE" id="PS50880">
    <property type="entry name" value="TOPRIM"/>
    <property type="match status" value="1"/>
</dbReference>
<keyword id="KW-0235">DNA replication</keyword>
<keyword id="KW-0238">DNA-binding</keyword>
<keyword id="KW-0240">DNA-directed RNA polymerase</keyword>
<keyword id="KW-0460">Magnesium</keyword>
<keyword id="KW-0479">Metal-binding</keyword>
<keyword id="KW-0548">Nucleotidyltransferase</keyword>
<keyword id="KW-0639">Primosome</keyword>
<keyword id="KW-1185">Reference proteome</keyword>
<keyword id="KW-0804">Transcription</keyword>
<keyword id="KW-0808">Transferase</keyword>
<keyword id="KW-0862">Zinc</keyword>
<keyword id="KW-0863">Zinc-finger</keyword>